<name>PFA4_CRYNJ</name>
<accession>P0CS68</accession>
<accession>Q55YA8</accession>
<accession>Q55YA9</accession>
<accession>Q5KLN0</accession>
<accession>Q5KLN1</accession>
<sequence length="459" mass="52818">MAARNWSRVWVGGTVILISFIAFSSQIFVIWPWYGREISLDLLKLLVPLNLAAFMIFWNYRLCVITSPGSVPEGWRPNIGAMDGMEVKKGTHTPRYCKNCEHYKPPRAHHCRQCKTCWLKLDHHCPWIGNCVGFYNQGHFIRFLLWVDIGTTFHLIIMVRRVLYIAEYYHQEPTLADVLFLVFNFATCVPVWLCVGMFSIYHVYLACGNSTTIEGWEKDKVATLIRRGKIKEVKYPYNIGIYKNIKSVLGPNPFLWLWPQKMQGDGLSFPVNPSAGDHTTQYFWPPQDPSRLPNPPPIPAHASPFVYGNNGFNPNLQPTNSLRARRSSTPHIDEDEHSHERDQYRHYSSGEERDNDSISTSSSPKPYLSDYDHYDEGPMYPGERMTALIPRVRRGSEGWEVAPGGGWNAYSGMMDEEVGWDDEVGYDEAPGEGPYVERPWEMRGRYNVYDTEEESGYAH</sequence>
<organism>
    <name type="scientific">Cryptococcus neoformans var. neoformans serotype D (strain JEC21 / ATCC MYA-565)</name>
    <name type="common">Filobasidiella neoformans</name>
    <dbReference type="NCBI Taxonomy" id="214684"/>
    <lineage>
        <taxon>Eukaryota</taxon>
        <taxon>Fungi</taxon>
        <taxon>Dikarya</taxon>
        <taxon>Basidiomycota</taxon>
        <taxon>Agaricomycotina</taxon>
        <taxon>Tremellomycetes</taxon>
        <taxon>Tremellales</taxon>
        <taxon>Cryptococcaceae</taxon>
        <taxon>Cryptococcus</taxon>
        <taxon>Cryptococcus neoformans species complex</taxon>
    </lineage>
</organism>
<evidence type="ECO:0000255" key="1">
    <source>
        <dbReference type="HAMAP-Rule" id="MF_03199"/>
    </source>
</evidence>
<evidence type="ECO:0000255" key="2">
    <source>
        <dbReference type="PROSITE-ProRule" id="PRU00067"/>
    </source>
</evidence>
<evidence type="ECO:0000256" key="3">
    <source>
        <dbReference type="SAM" id="MobiDB-lite"/>
    </source>
</evidence>
<evidence type="ECO:0000305" key="4"/>
<protein>
    <recommendedName>
        <fullName evidence="1">Palmitoyltransferase PFA4</fullName>
        <ecNumber evidence="1">2.3.1.225</ecNumber>
    </recommendedName>
    <alternativeName>
        <fullName evidence="1">Protein S-acyltransferase</fullName>
        <shortName evidence="1">PAT</shortName>
    </alternativeName>
    <alternativeName>
        <fullName evidence="1">Protein fatty acyltransferase 4</fullName>
    </alternativeName>
</protein>
<comment type="function">
    <text evidence="1">Mediates the reversible addition of palmitate to target proteins, thereby regulating their membrane association and biological function.</text>
</comment>
<comment type="catalytic activity">
    <reaction evidence="1">
        <text>L-cysteinyl-[protein] + hexadecanoyl-CoA = S-hexadecanoyl-L-cysteinyl-[protein] + CoA</text>
        <dbReference type="Rhea" id="RHEA:36683"/>
        <dbReference type="Rhea" id="RHEA-COMP:10131"/>
        <dbReference type="Rhea" id="RHEA-COMP:11032"/>
        <dbReference type="ChEBI" id="CHEBI:29950"/>
        <dbReference type="ChEBI" id="CHEBI:57287"/>
        <dbReference type="ChEBI" id="CHEBI:57379"/>
        <dbReference type="ChEBI" id="CHEBI:74151"/>
        <dbReference type="EC" id="2.3.1.225"/>
    </reaction>
</comment>
<comment type="subcellular location">
    <subcellularLocation>
        <location evidence="1">Endoplasmic reticulum membrane</location>
        <topology evidence="1">Multi-pass membrane protein</topology>
    </subcellularLocation>
</comment>
<comment type="alternative products">
    <event type="alternative splicing"/>
    <isoform>
        <id>P0CS68-1</id>
        <name>1</name>
        <sequence type="displayed"/>
    </isoform>
    <isoform>
        <id>P0CS68-2</id>
        <name>2</name>
        <sequence type="described" ref="VSP_041433 VSP_041434"/>
    </isoform>
</comment>
<comment type="domain">
    <text evidence="1">The DHHC domain is required for palmitoyltransferase activity.</text>
</comment>
<comment type="similarity">
    <text evidence="1">Belongs to the DHHC palmitoyltransferase family. PFA4 subfamily.</text>
</comment>
<comment type="sequence caution" evidence="4">
    <conflict type="erroneous gene model prediction">
        <sequence resource="EMBL-CDS" id="AAW41652"/>
    </conflict>
</comment>
<comment type="sequence caution" evidence="4">
    <conflict type="erroneous gene model prediction">
        <sequence resource="EMBL-CDS" id="AAW41653"/>
    </conflict>
</comment>
<dbReference type="EC" id="2.3.1.225" evidence="1"/>
<dbReference type="EMBL" id="AE017342">
    <property type="protein sequence ID" value="AAW41652.1"/>
    <property type="status" value="ALT_SEQ"/>
    <property type="molecule type" value="Genomic_DNA"/>
</dbReference>
<dbReference type="EMBL" id="AE017342">
    <property type="protein sequence ID" value="AAW41653.1"/>
    <property type="status" value="ALT_SEQ"/>
    <property type="molecule type" value="Genomic_DNA"/>
</dbReference>
<dbReference type="RefSeq" id="XP_568959.1">
    <property type="nucleotide sequence ID" value="XM_568959.1"/>
</dbReference>
<dbReference type="RefSeq" id="XP_568960.1">
    <property type="nucleotide sequence ID" value="XM_568960.1"/>
</dbReference>
<dbReference type="SMR" id="P0CS68"/>
<dbReference type="PaxDb" id="214684-P0CS68"/>
<dbReference type="EnsemblFungi" id="AAW41652">
    <molecule id="P0CS68-1"/>
    <property type="protein sequence ID" value="AAW41652"/>
    <property type="gene ID" value="CNB04690"/>
</dbReference>
<dbReference type="EnsemblFungi" id="AAW41653">
    <molecule id="P0CS68-2"/>
    <property type="protein sequence ID" value="AAW41653"/>
    <property type="gene ID" value="CNB04690"/>
</dbReference>
<dbReference type="VEuPathDB" id="FungiDB:CNB04690"/>
<dbReference type="eggNOG" id="KOG1315">
    <property type="taxonomic scope" value="Eukaryota"/>
</dbReference>
<dbReference type="HOGENOM" id="CLU_027721_9_0_1"/>
<dbReference type="InParanoid" id="P0CS68"/>
<dbReference type="OrthoDB" id="331948at2759"/>
<dbReference type="Proteomes" id="UP000002149">
    <property type="component" value="Chromosome 2"/>
</dbReference>
<dbReference type="GO" id="GO:0005783">
    <property type="term" value="C:endoplasmic reticulum"/>
    <property type="evidence" value="ECO:0000318"/>
    <property type="project" value="GO_Central"/>
</dbReference>
<dbReference type="GO" id="GO:0005789">
    <property type="term" value="C:endoplasmic reticulum membrane"/>
    <property type="evidence" value="ECO:0007669"/>
    <property type="project" value="UniProtKB-SubCell"/>
</dbReference>
<dbReference type="GO" id="GO:0005794">
    <property type="term" value="C:Golgi apparatus"/>
    <property type="evidence" value="ECO:0000318"/>
    <property type="project" value="GO_Central"/>
</dbReference>
<dbReference type="GO" id="GO:0019706">
    <property type="term" value="F:protein-cysteine S-palmitoyltransferase activity"/>
    <property type="evidence" value="ECO:0000318"/>
    <property type="project" value="GO_Central"/>
</dbReference>
<dbReference type="GO" id="GO:0006612">
    <property type="term" value="P:protein targeting to membrane"/>
    <property type="evidence" value="ECO:0000318"/>
    <property type="project" value="GO_Central"/>
</dbReference>
<dbReference type="HAMAP" id="MF_03199">
    <property type="entry name" value="DHHC_PAT_PFA4"/>
    <property type="match status" value="1"/>
</dbReference>
<dbReference type="InterPro" id="IPR001594">
    <property type="entry name" value="Palmitoyltrfase_DHHC"/>
</dbReference>
<dbReference type="InterPro" id="IPR033682">
    <property type="entry name" value="PFA4"/>
</dbReference>
<dbReference type="InterPro" id="IPR039859">
    <property type="entry name" value="PFA4/ZDH16/20/ERF2-like"/>
</dbReference>
<dbReference type="PANTHER" id="PTHR12246">
    <property type="entry name" value="PALMITOYLTRANSFERASE ZDHHC16"/>
    <property type="match status" value="1"/>
</dbReference>
<dbReference type="Pfam" id="PF01529">
    <property type="entry name" value="DHHC"/>
    <property type="match status" value="1"/>
</dbReference>
<dbReference type="PROSITE" id="PS50216">
    <property type="entry name" value="DHHC"/>
    <property type="match status" value="1"/>
</dbReference>
<keyword id="KW-0012">Acyltransferase</keyword>
<keyword id="KW-0025">Alternative splicing</keyword>
<keyword id="KW-0256">Endoplasmic reticulum</keyword>
<keyword id="KW-0449">Lipoprotein</keyword>
<keyword id="KW-0472">Membrane</keyword>
<keyword id="KW-0564">Palmitate</keyword>
<keyword id="KW-1185">Reference proteome</keyword>
<keyword id="KW-0808">Transferase</keyword>
<keyword id="KW-0812">Transmembrane</keyword>
<keyword id="KW-1133">Transmembrane helix</keyword>
<proteinExistence type="inferred from homology"/>
<feature type="chain" id="PRO_0000212964" description="Palmitoyltransferase PFA4">
    <location>
        <begin position="1"/>
        <end position="459"/>
    </location>
</feature>
<feature type="topological domain" description="Cytoplasmic" evidence="1">
    <location>
        <begin position="1"/>
        <end position="9"/>
    </location>
</feature>
<feature type="transmembrane region" description="Helical" evidence="1">
    <location>
        <begin position="10"/>
        <end position="30"/>
    </location>
</feature>
<feature type="topological domain" description="Lumenal" evidence="1">
    <location>
        <begin position="31"/>
        <end position="37"/>
    </location>
</feature>
<feature type="transmembrane region" description="Helical" evidence="1">
    <location>
        <begin position="38"/>
        <end position="58"/>
    </location>
</feature>
<feature type="topological domain" description="Cytoplasmic" evidence="1">
    <location>
        <begin position="59"/>
        <end position="138"/>
    </location>
</feature>
<feature type="transmembrane region" description="Helical" evidence="1">
    <location>
        <begin position="139"/>
        <end position="159"/>
    </location>
</feature>
<feature type="topological domain" description="Lumenal" evidence="1">
    <location>
        <begin position="160"/>
        <end position="177"/>
    </location>
</feature>
<feature type="transmembrane region" description="Helical" evidence="1">
    <location>
        <begin position="178"/>
        <end position="198"/>
    </location>
</feature>
<feature type="topological domain" description="Cytoplasmic" evidence="1">
    <location>
        <begin position="199"/>
        <end position="459"/>
    </location>
</feature>
<feature type="domain" description="DHHC" evidence="2">
    <location>
        <begin position="95"/>
        <end position="145"/>
    </location>
</feature>
<feature type="region of interest" description="Disordered" evidence="3">
    <location>
        <begin position="278"/>
        <end position="379"/>
    </location>
</feature>
<feature type="compositionally biased region" description="Pro residues" evidence="3">
    <location>
        <begin position="286"/>
        <end position="299"/>
    </location>
</feature>
<feature type="compositionally biased region" description="Polar residues" evidence="3">
    <location>
        <begin position="310"/>
        <end position="322"/>
    </location>
</feature>
<feature type="compositionally biased region" description="Basic and acidic residues" evidence="3">
    <location>
        <begin position="331"/>
        <end position="356"/>
    </location>
</feature>
<feature type="active site" description="S-palmitoyl cysteine intermediate" evidence="1">
    <location>
        <position position="125"/>
    </location>
</feature>
<feature type="splice variant" id="VSP_041433" description="In isoform 2." evidence="4">
    <original>DHTTQYFWPPQDPSRLPNPPPIPAHASPFVYGNNGFNPNLQPTNSLRARRSSTPHIDEDEHSHE</original>
    <variation>GESATVEWAGIVAPREGSSAPGEYGAADQCESAGSGSGTNGRPGMGHGEERVRHGRARVEHSMV</variation>
    <location>
        <begin position="277"/>
        <end position="340"/>
    </location>
</feature>
<feature type="splice variant" id="VSP_041434" description="In isoform 2." evidence="4">
    <location>
        <begin position="341"/>
        <end position="459"/>
    </location>
</feature>
<reference key="1">
    <citation type="journal article" date="2005" name="Science">
        <title>The genome of the basidiomycetous yeast and human pathogen Cryptococcus neoformans.</title>
        <authorList>
            <person name="Loftus B.J."/>
            <person name="Fung E."/>
            <person name="Roncaglia P."/>
            <person name="Rowley D."/>
            <person name="Amedeo P."/>
            <person name="Bruno D."/>
            <person name="Vamathevan J."/>
            <person name="Miranda M."/>
            <person name="Anderson I.J."/>
            <person name="Fraser J.A."/>
            <person name="Allen J.E."/>
            <person name="Bosdet I.E."/>
            <person name="Brent M.R."/>
            <person name="Chiu R."/>
            <person name="Doering T.L."/>
            <person name="Donlin M.J."/>
            <person name="D'Souza C.A."/>
            <person name="Fox D.S."/>
            <person name="Grinberg V."/>
            <person name="Fu J."/>
            <person name="Fukushima M."/>
            <person name="Haas B.J."/>
            <person name="Huang J.C."/>
            <person name="Janbon G."/>
            <person name="Jones S.J.M."/>
            <person name="Koo H.L."/>
            <person name="Krzywinski M.I."/>
            <person name="Kwon-Chung K.J."/>
            <person name="Lengeler K.B."/>
            <person name="Maiti R."/>
            <person name="Marra M.A."/>
            <person name="Marra R.E."/>
            <person name="Mathewson C.A."/>
            <person name="Mitchell T.G."/>
            <person name="Pertea M."/>
            <person name="Riggs F.R."/>
            <person name="Salzberg S.L."/>
            <person name="Schein J.E."/>
            <person name="Shvartsbeyn A."/>
            <person name="Shin H."/>
            <person name="Shumway M."/>
            <person name="Specht C.A."/>
            <person name="Suh B.B."/>
            <person name="Tenney A."/>
            <person name="Utterback T.R."/>
            <person name="Wickes B.L."/>
            <person name="Wortman J.R."/>
            <person name="Wye N.H."/>
            <person name="Kronstad J.W."/>
            <person name="Lodge J.K."/>
            <person name="Heitman J."/>
            <person name="Davis R.W."/>
            <person name="Fraser C.M."/>
            <person name="Hyman R.W."/>
        </authorList>
    </citation>
    <scope>NUCLEOTIDE SEQUENCE [LARGE SCALE GENOMIC DNA]</scope>
    <source>
        <strain>JEC21 / ATCC MYA-565</strain>
    </source>
</reference>
<gene>
    <name evidence="1" type="primary">PFA4</name>
    <name type="ordered locus">CNB04690</name>
</gene>